<proteinExistence type="inferred from homology"/>
<evidence type="ECO:0000255" key="1">
    <source>
        <dbReference type="HAMAP-Rule" id="MF_01368"/>
    </source>
</evidence>
<evidence type="ECO:0000256" key="2">
    <source>
        <dbReference type="SAM" id="MobiDB-lite"/>
    </source>
</evidence>
<evidence type="ECO:0000305" key="3"/>
<name>RL17_MYCSS</name>
<gene>
    <name evidence="1" type="primary">rplQ</name>
    <name type="ordered locus">Mmcs_1114</name>
</gene>
<reference key="1">
    <citation type="submission" date="2006-06" db="EMBL/GenBank/DDBJ databases">
        <title>Complete sequence of chromosome of Mycobacterium sp. MCS.</title>
        <authorList>
            <consortium name="US DOE Joint Genome Institute"/>
            <person name="Copeland A."/>
            <person name="Lucas S."/>
            <person name="Lapidus A."/>
            <person name="Barry K."/>
            <person name="Detter J.C."/>
            <person name="Glavina del Rio T."/>
            <person name="Hammon N."/>
            <person name="Israni S."/>
            <person name="Dalin E."/>
            <person name="Tice H."/>
            <person name="Pitluck S."/>
            <person name="Martinez M."/>
            <person name="Schmutz J."/>
            <person name="Larimer F."/>
            <person name="Land M."/>
            <person name="Hauser L."/>
            <person name="Kyrpides N."/>
            <person name="Kim E."/>
            <person name="Miller C.D."/>
            <person name="Hughes J.E."/>
            <person name="Anderson A.J."/>
            <person name="Sims R.C."/>
            <person name="Richardson P."/>
        </authorList>
    </citation>
    <scope>NUCLEOTIDE SEQUENCE [LARGE SCALE GENOMIC DNA]</scope>
    <source>
        <strain>MCS</strain>
    </source>
</reference>
<comment type="subunit">
    <text evidence="1">Part of the 50S ribosomal subunit. Contacts protein L32.</text>
</comment>
<comment type="similarity">
    <text evidence="1">Belongs to the bacterial ribosomal protein bL17 family.</text>
</comment>
<organism>
    <name type="scientific">Mycobacterium sp. (strain MCS)</name>
    <dbReference type="NCBI Taxonomy" id="164756"/>
    <lineage>
        <taxon>Bacteria</taxon>
        <taxon>Bacillati</taxon>
        <taxon>Actinomycetota</taxon>
        <taxon>Actinomycetes</taxon>
        <taxon>Mycobacteriales</taxon>
        <taxon>Mycobacteriaceae</taxon>
        <taxon>Mycobacterium</taxon>
    </lineage>
</organism>
<dbReference type="EMBL" id="CP000384">
    <property type="protein sequence ID" value="ABG07227.1"/>
    <property type="molecule type" value="Genomic_DNA"/>
</dbReference>
<dbReference type="SMR" id="Q1BD07"/>
<dbReference type="KEGG" id="mmc:Mmcs_1114"/>
<dbReference type="HOGENOM" id="CLU_074407_0_0_11"/>
<dbReference type="BioCyc" id="MSP164756:G1G6O-1140-MONOMER"/>
<dbReference type="GO" id="GO:0022625">
    <property type="term" value="C:cytosolic large ribosomal subunit"/>
    <property type="evidence" value="ECO:0007669"/>
    <property type="project" value="TreeGrafter"/>
</dbReference>
<dbReference type="GO" id="GO:0003735">
    <property type="term" value="F:structural constituent of ribosome"/>
    <property type="evidence" value="ECO:0007669"/>
    <property type="project" value="InterPro"/>
</dbReference>
<dbReference type="GO" id="GO:0006412">
    <property type="term" value="P:translation"/>
    <property type="evidence" value="ECO:0007669"/>
    <property type="project" value="UniProtKB-UniRule"/>
</dbReference>
<dbReference type="FunFam" id="3.90.1030.10:FF:000001">
    <property type="entry name" value="50S ribosomal protein L17"/>
    <property type="match status" value="1"/>
</dbReference>
<dbReference type="Gene3D" id="3.90.1030.10">
    <property type="entry name" value="Ribosomal protein L17"/>
    <property type="match status" value="1"/>
</dbReference>
<dbReference type="HAMAP" id="MF_01368">
    <property type="entry name" value="Ribosomal_bL17"/>
    <property type="match status" value="1"/>
</dbReference>
<dbReference type="InterPro" id="IPR000456">
    <property type="entry name" value="Ribosomal_bL17"/>
</dbReference>
<dbReference type="InterPro" id="IPR047859">
    <property type="entry name" value="Ribosomal_bL17_CS"/>
</dbReference>
<dbReference type="InterPro" id="IPR036373">
    <property type="entry name" value="Ribosomal_bL17_sf"/>
</dbReference>
<dbReference type="NCBIfam" id="TIGR00059">
    <property type="entry name" value="L17"/>
    <property type="match status" value="1"/>
</dbReference>
<dbReference type="PANTHER" id="PTHR14413:SF16">
    <property type="entry name" value="LARGE RIBOSOMAL SUBUNIT PROTEIN BL17M"/>
    <property type="match status" value="1"/>
</dbReference>
<dbReference type="PANTHER" id="PTHR14413">
    <property type="entry name" value="RIBOSOMAL PROTEIN L17"/>
    <property type="match status" value="1"/>
</dbReference>
<dbReference type="Pfam" id="PF01196">
    <property type="entry name" value="Ribosomal_L17"/>
    <property type="match status" value="1"/>
</dbReference>
<dbReference type="SUPFAM" id="SSF64263">
    <property type="entry name" value="Prokaryotic ribosomal protein L17"/>
    <property type="match status" value="1"/>
</dbReference>
<dbReference type="PROSITE" id="PS01167">
    <property type="entry name" value="RIBOSOMAL_L17"/>
    <property type="match status" value="1"/>
</dbReference>
<protein>
    <recommendedName>
        <fullName evidence="1">Large ribosomal subunit protein bL17</fullName>
    </recommendedName>
    <alternativeName>
        <fullName evidence="3">50S ribosomal protein L17</fullName>
    </alternativeName>
</protein>
<accession>Q1BD07</accession>
<keyword id="KW-0687">Ribonucleoprotein</keyword>
<keyword id="KW-0689">Ribosomal protein</keyword>
<sequence>MPKPTKGPRLGGSSSHQKALLANLATSLFEHGRIKTTEPKARALRPYAEKLITHAKKGELHNRREVMKKIRDKDVVHTLFAEIGPFFADREGGYTRIIKVEPRKGDNAPMAVIELVREKTVTSEANRARRVGASKQTAPVAAAAAPQAAVEPEATEGPDADDSSALPEAEDTTASEASRSTETDDPTQDSDADKS</sequence>
<feature type="chain" id="PRO_1000055885" description="Large ribosomal subunit protein bL17">
    <location>
        <begin position="1"/>
        <end position="195"/>
    </location>
</feature>
<feature type="region of interest" description="Disordered" evidence="2">
    <location>
        <begin position="125"/>
        <end position="195"/>
    </location>
</feature>
<feature type="compositionally biased region" description="Low complexity" evidence="2">
    <location>
        <begin position="136"/>
        <end position="152"/>
    </location>
</feature>
<feature type="compositionally biased region" description="Acidic residues" evidence="2">
    <location>
        <begin position="153"/>
        <end position="173"/>
    </location>
</feature>
<feature type="compositionally biased region" description="Acidic residues" evidence="2">
    <location>
        <begin position="183"/>
        <end position="195"/>
    </location>
</feature>